<organism>
    <name type="scientific">Prochlorococcus marinus subsp. pastoris (strain CCMP1986 / NIES-2087 / MED4)</name>
    <dbReference type="NCBI Taxonomy" id="59919"/>
    <lineage>
        <taxon>Bacteria</taxon>
        <taxon>Bacillati</taxon>
        <taxon>Cyanobacteriota</taxon>
        <taxon>Cyanophyceae</taxon>
        <taxon>Synechococcales</taxon>
        <taxon>Prochlorococcaceae</taxon>
        <taxon>Prochlorococcus</taxon>
    </lineage>
</organism>
<accession>Q7V101</accession>
<keyword id="KW-0001">2Fe-2S</keyword>
<keyword id="KW-0004">4Fe-4S</keyword>
<keyword id="KW-0093">Biotin biosynthesis</keyword>
<keyword id="KW-0408">Iron</keyword>
<keyword id="KW-0411">Iron-sulfur</keyword>
<keyword id="KW-0479">Metal-binding</keyword>
<keyword id="KW-0949">S-adenosyl-L-methionine</keyword>
<keyword id="KW-0808">Transferase</keyword>
<evidence type="ECO:0000255" key="1">
    <source>
        <dbReference type="HAMAP-Rule" id="MF_01694"/>
    </source>
</evidence>
<evidence type="ECO:0000255" key="2">
    <source>
        <dbReference type="PROSITE-ProRule" id="PRU01266"/>
    </source>
</evidence>
<proteinExistence type="inferred from homology"/>
<feature type="chain" id="PRO_0000381546" description="Biotin synthase">
    <location>
        <begin position="1"/>
        <end position="335"/>
    </location>
</feature>
<feature type="domain" description="Radical SAM core" evidence="2">
    <location>
        <begin position="46"/>
        <end position="274"/>
    </location>
</feature>
<feature type="binding site" evidence="1">
    <location>
        <position position="61"/>
    </location>
    <ligand>
        <name>[4Fe-4S] cluster</name>
        <dbReference type="ChEBI" id="CHEBI:49883"/>
        <note>4Fe-4S-S-AdoMet</note>
    </ligand>
</feature>
<feature type="binding site" evidence="1">
    <location>
        <position position="65"/>
    </location>
    <ligand>
        <name>[4Fe-4S] cluster</name>
        <dbReference type="ChEBI" id="CHEBI:49883"/>
        <note>4Fe-4S-S-AdoMet</note>
    </ligand>
</feature>
<feature type="binding site" evidence="1">
    <location>
        <position position="68"/>
    </location>
    <ligand>
        <name>[4Fe-4S] cluster</name>
        <dbReference type="ChEBI" id="CHEBI:49883"/>
        <note>4Fe-4S-S-AdoMet</note>
    </ligand>
</feature>
<feature type="binding site" evidence="1">
    <location>
        <position position="105"/>
    </location>
    <ligand>
        <name>[2Fe-2S] cluster</name>
        <dbReference type="ChEBI" id="CHEBI:190135"/>
    </ligand>
</feature>
<feature type="binding site" evidence="1">
    <location>
        <position position="137"/>
    </location>
    <ligand>
        <name>[2Fe-2S] cluster</name>
        <dbReference type="ChEBI" id="CHEBI:190135"/>
    </ligand>
</feature>
<feature type="binding site" evidence="1">
    <location>
        <position position="197"/>
    </location>
    <ligand>
        <name>[2Fe-2S] cluster</name>
        <dbReference type="ChEBI" id="CHEBI:190135"/>
    </ligand>
</feature>
<feature type="binding site" evidence="1">
    <location>
        <position position="269"/>
    </location>
    <ligand>
        <name>[2Fe-2S] cluster</name>
        <dbReference type="ChEBI" id="CHEBI:190135"/>
    </ligand>
</feature>
<name>BIOB_PROMP</name>
<dbReference type="EC" id="2.8.1.6" evidence="1"/>
<dbReference type="EMBL" id="BX548174">
    <property type="protein sequence ID" value="CAE19552.1"/>
    <property type="molecule type" value="Genomic_DNA"/>
</dbReference>
<dbReference type="RefSeq" id="WP_011132726.1">
    <property type="nucleotide sequence ID" value="NC_005072.1"/>
</dbReference>
<dbReference type="SMR" id="Q7V101"/>
<dbReference type="STRING" id="59919.PMM1093"/>
<dbReference type="KEGG" id="pmm:PMM1093"/>
<dbReference type="eggNOG" id="COG0502">
    <property type="taxonomic scope" value="Bacteria"/>
</dbReference>
<dbReference type="HOGENOM" id="CLU_033172_1_2_3"/>
<dbReference type="OrthoDB" id="9786826at2"/>
<dbReference type="UniPathway" id="UPA00078">
    <property type="reaction ID" value="UER00162"/>
</dbReference>
<dbReference type="Proteomes" id="UP000001026">
    <property type="component" value="Chromosome"/>
</dbReference>
<dbReference type="GO" id="GO:0051537">
    <property type="term" value="F:2 iron, 2 sulfur cluster binding"/>
    <property type="evidence" value="ECO:0007669"/>
    <property type="project" value="UniProtKB-KW"/>
</dbReference>
<dbReference type="GO" id="GO:0051539">
    <property type="term" value="F:4 iron, 4 sulfur cluster binding"/>
    <property type="evidence" value="ECO:0007669"/>
    <property type="project" value="UniProtKB-KW"/>
</dbReference>
<dbReference type="GO" id="GO:0004076">
    <property type="term" value="F:biotin synthase activity"/>
    <property type="evidence" value="ECO:0007669"/>
    <property type="project" value="UniProtKB-UniRule"/>
</dbReference>
<dbReference type="GO" id="GO:0005506">
    <property type="term" value="F:iron ion binding"/>
    <property type="evidence" value="ECO:0007669"/>
    <property type="project" value="UniProtKB-UniRule"/>
</dbReference>
<dbReference type="GO" id="GO:0009102">
    <property type="term" value="P:biotin biosynthetic process"/>
    <property type="evidence" value="ECO:0007669"/>
    <property type="project" value="UniProtKB-UniRule"/>
</dbReference>
<dbReference type="CDD" id="cd01335">
    <property type="entry name" value="Radical_SAM"/>
    <property type="match status" value="1"/>
</dbReference>
<dbReference type="Gene3D" id="3.20.20.70">
    <property type="entry name" value="Aldolase class I"/>
    <property type="match status" value="1"/>
</dbReference>
<dbReference type="HAMAP" id="MF_01694">
    <property type="entry name" value="BioB"/>
    <property type="match status" value="1"/>
</dbReference>
<dbReference type="InterPro" id="IPR013785">
    <property type="entry name" value="Aldolase_TIM"/>
</dbReference>
<dbReference type="InterPro" id="IPR010722">
    <property type="entry name" value="BATS_dom"/>
</dbReference>
<dbReference type="InterPro" id="IPR002684">
    <property type="entry name" value="Biotin_synth/BioAB"/>
</dbReference>
<dbReference type="InterPro" id="IPR024177">
    <property type="entry name" value="Biotin_synthase"/>
</dbReference>
<dbReference type="InterPro" id="IPR006638">
    <property type="entry name" value="Elp3/MiaA/NifB-like_rSAM"/>
</dbReference>
<dbReference type="InterPro" id="IPR007197">
    <property type="entry name" value="rSAM"/>
</dbReference>
<dbReference type="NCBIfam" id="TIGR00433">
    <property type="entry name" value="bioB"/>
    <property type="match status" value="1"/>
</dbReference>
<dbReference type="PANTHER" id="PTHR22976">
    <property type="entry name" value="BIOTIN SYNTHASE"/>
    <property type="match status" value="1"/>
</dbReference>
<dbReference type="PANTHER" id="PTHR22976:SF2">
    <property type="entry name" value="BIOTIN SYNTHASE, MITOCHONDRIAL"/>
    <property type="match status" value="1"/>
</dbReference>
<dbReference type="Pfam" id="PF06968">
    <property type="entry name" value="BATS"/>
    <property type="match status" value="1"/>
</dbReference>
<dbReference type="Pfam" id="PF04055">
    <property type="entry name" value="Radical_SAM"/>
    <property type="match status" value="1"/>
</dbReference>
<dbReference type="PIRSF" id="PIRSF001619">
    <property type="entry name" value="Biotin_synth"/>
    <property type="match status" value="1"/>
</dbReference>
<dbReference type="SFLD" id="SFLDF00272">
    <property type="entry name" value="biotin_synthase"/>
    <property type="match status" value="1"/>
</dbReference>
<dbReference type="SFLD" id="SFLDG01278">
    <property type="entry name" value="biotin_synthase_like"/>
    <property type="match status" value="1"/>
</dbReference>
<dbReference type="SMART" id="SM00876">
    <property type="entry name" value="BATS"/>
    <property type="match status" value="1"/>
</dbReference>
<dbReference type="SMART" id="SM00729">
    <property type="entry name" value="Elp3"/>
    <property type="match status" value="1"/>
</dbReference>
<dbReference type="SUPFAM" id="SSF102114">
    <property type="entry name" value="Radical SAM enzymes"/>
    <property type="match status" value="1"/>
</dbReference>
<dbReference type="PROSITE" id="PS51918">
    <property type="entry name" value="RADICAL_SAM"/>
    <property type="match status" value="1"/>
</dbReference>
<sequence length="335" mass="37719">MINSDNQKFSEIRFDWERDEILEILNYPLIDLMWEAQIIHRRFNQYKVQLASLFSVKTGGCEENCSYCSQSIYSSSQIKSHPQFEVEAVLNRAKTAKKEGADRFCMGWAWREIRDGKPFNSMIEMVKGVKELGMEACVTAGMLTDEQALKLADAGLTAYNHNLDTSPEYYKNIITTRTYQDRLETIKRVRNAGINVCCGGIIGLGEDNGDRASLLEVLSNMNPHPESVPINSLVAIEGTGLEGGKEIDSIEMIRMIATARILMPKSKIRLSAGRENLTKEAQILCFQCGANSIFYGDELLTTSNPSFQDDRKLLKDVGVLFNKDFEYCDKTVSTV</sequence>
<protein>
    <recommendedName>
        <fullName evidence="1">Biotin synthase</fullName>
        <ecNumber evidence="1">2.8.1.6</ecNumber>
    </recommendedName>
</protein>
<reference key="1">
    <citation type="journal article" date="2003" name="Nature">
        <title>Genome divergence in two Prochlorococcus ecotypes reflects oceanic niche differentiation.</title>
        <authorList>
            <person name="Rocap G."/>
            <person name="Larimer F.W."/>
            <person name="Lamerdin J.E."/>
            <person name="Malfatti S."/>
            <person name="Chain P."/>
            <person name="Ahlgren N.A."/>
            <person name="Arellano A."/>
            <person name="Coleman M."/>
            <person name="Hauser L."/>
            <person name="Hess W.R."/>
            <person name="Johnson Z.I."/>
            <person name="Land M.L."/>
            <person name="Lindell D."/>
            <person name="Post A.F."/>
            <person name="Regala W."/>
            <person name="Shah M."/>
            <person name="Shaw S.L."/>
            <person name="Steglich C."/>
            <person name="Sullivan M.B."/>
            <person name="Ting C.S."/>
            <person name="Tolonen A."/>
            <person name="Webb E.A."/>
            <person name="Zinser E.R."/>
            <person name="Chisholm S.W."/>
        </authorList>
    </citation>
    <scope>NUCLEOTIDE SEQUENCE [LARGE SCALE GENOMIC DNA]</scope>
    <source>
        <strain>CCMP1986 / NIES-2087 / MED4</strain>
    </source>
</reference>
<comment type="function">
    <text evidence="1">Catalyzes the conversion of dethiobiotin (DTB) to biotin by the insertion of a sulfur atom into dethiobiotin via a radical-based mechanism.</text>
</comment>
<comment type="catalytic activity">
    <reaction evidence="1">
        <text>(4R,5S)-dethiobiotin + (sulfur carrier)-SH + 2 reduced [2Fe-2S]-[ferredoxin] + 2 S-adenosyl-L-methionine = (sulfur carrier)-H + biotin + 2 5'-deoxyadenosine + 2 L-methionine + 2 oxidized [2Fe-2S]-[ferredoxin]</text>
        <dbReference type="Rhea" id="RHEA:22060"/>
        <dbReference type="Rhea" id="RHEA-COMP:10000"/>
        <dbReference type="Rhea" id="RHEA-COMP:10001"/>
        <dbReference type="Rhea" id="RHEA-COMP:14737"/>
        <dbReference type="Rhea" id="RHEA-COMP:14739"/>
        <dbReference type="ChEBI" id="CHEBI:17319"/>
        <dbReference type="ChEBI" id="CHEBI:29917"/>
        <dbReference type="ChEBI" id="CHEBI:33737"/>
        <dbReference type="ChEBI" id="CHEBI:33738"/>
        <dbReference type="ChEBI" id="CHEBI:57586"/>
        <dbReference type="ChEBI" id="CHEBI:57844"/>
        <dbReference type="ChEBI" id="CHEBI:59789"/>
        <dbReference type="ChEBI" id="CHEBI:64428"/>
        <dbReference type="ChEBI" id="CHEBI:149473"/>
        <dbReference type="EC" id="2.8.1.6"/>
    </reaction>
</comment>
<comment type="cofactor">
    <cofactor evidence="1">
        <name>[4Fe-4S] cluster</name>
        <dbReference type="ChEBI" id="CHEBI:49883"/>
    </cofactor>
    <text evidence="1">Binds 1 [4Fe-4S] cluster. The cluster is coordinated with 3 cysteines and an exchangeable S-adenosyl-L-methionine.</text>
</comment>
<comment type="cofactor">
    <cofactor evidence="1">
        <name>[2Fe-2S] cluster</name>
        <dbReference type="ChEBI" id="CHEBI:190135"/>
    </cofactor>
    <text evidence="1">Binds 1 [2Fe-2S] cluster. The cluster is coordinated with 3 cysteines and 1 arginine.</text>
</comment>
<comment type="pathway">
    <text evidence="1">Cofactor biosynthesis; biotin biosynthesis; biotin from 7,8-diaminononanoate: step 2/2.</text>
</comment>
<comment type="subunit">
    <text evidence="1">Homodimer.</text>
</comment>
<comment type="similarity">
    <text evidence="1">Belongs to the radical SAM superfamily. Biotin synthase family.</text>
</comment>
<gene>
    <name evidence="1" type="primary">bioB</name>
    <name type="ordered locus">PMM1093</name>
</gene>